<feature type="chain" id="PRO_0000137736" description="Argininosuccinate lyase">
    <location>
        <begin position="1"/>
        <end position="462"/>
    </location>
</feature>
<evidence type="ECO:0000255" key="1">
    <source>
        <dbReference type="HAMAP-Rule" id="MF_00006"/>
    </source>
</evidence>
<protein>
    <recommendedName>
        <fullName evidence="1">Argininosuccinate lyase</fullName>
        <shortName evidence="1">ASAL</shortName>
        <ecNumber evidence="1">4.3.2.1</ecNumber>
    </recommendedName>
    <alternativeName>
        <fullName evidence="1">Arginosuccinase</fullName>
    </alternativeName>
</protein>
<comment type="catalytic activity">
    <reaction evidence="1">
        <text>2-(N(omega)-L-arginino)succinate = fumarate + L-arginine</text>
        <dbReference type="Rhea" id="RHEA:24020"/>
        <dbReference type="ChEBI" id="CHEBI:29806"/>
        <dbReference type="ChEBI" id="CHEBI:32682"/>
        <dbReference type="ChEBI" id="CHEBI:57472"/>
        <dbReference type="EC" id="4.3.2.1"/>
    </reaction>
</comment>
<comment type="pathway">
    <text evidence="1">Amino-acid biosynthesis; L-arginine biosynthesis; L-arginine from L-ornithine and carbamoyl phosphate: step 3/3.</text>
</comment>
<comment type="subcellular location">
    <subcellularLocation>
        <location evidence="1">Cytoplasm</location>
    </subcellularLocation>
</comment>
<comment type="similarity">
    <text evidence="1">Belongs to the lyase 1 family. Argininosuccinate lyase subfamily.</text>
</comment>
<dbReference type="EC" id="4.3.2.1" evidence="1"/>
<dbReference type="EMBL" id="AE016877">
    <property type="protein sequence ID" value="AAP11536.1"/>
    <property type="molecule type" value="Genomic_DNA"/>
</dbReference>
<dbReference type="RefSeq" id="NP_834335.1">
    <property type="nucleotide sequence ID" value="NC_004722.1"/>
</dbReference>
<dbReference type="RefSeq" id="WP_000041296.1">
    <property type="nucleotide sequence ID" value="NC_004722.1"/>
</dbReference>
<dbReference type="SMR" id="Q817C7"/>
<dbReference type="STRING" id="226900.BC_4629"/>
<dbReference type="KEGG" id="bce:BC4629"/>
<dbReference type="PATRIC" id="fig|226900.8.peg.4792"/>
<dbReference type="HOGENOM" id="CLU_027272_2_3_9"/>
<dbReference type="OrthoDB" id="9769623at2"/>
<dbReference type="UniPathway" id="UPA00068">
    <property type="reaction ID" value="UER00114"/>
</dbReference>
<dbReference type="Proteomes" id="UP000001417">
    <property type="component" value="Chromosome"/>
</dbReference>
<dbReference type="GO" id="GO:0005829">
    <property type="term" value="C:cytosol"/>
    <property type="evidence" value="ECO:0000318"/>
    <property type="project" value="GO_Central"/>
</dbReference>
<dbReference type="GO" id="GO:0004056">
    <property type="term" value="F:argininosuccinate lyase activity"/>
    <property type="evidence" value="ECO:0000318"/>
    <property type="project" value="GO_Central"/>
</dbReference>
<dbReference type="GO" id="GO:0042450">
    <property type="term" value="P:arginine biosynthetic process via ornithine"/>
    <property type="evidence" value="ECO:0000318"/>
    <property type="project" value="GO_Central"/>
</dbReference>
<dbReference type="GO" id="GO:0006526">
    <property type="term" value="P:L-arginine biosynthetic process"/>
    <property type="evidence" value="ECO:0007669"/>
    <property type="project" value="UniProtKB-UniRule"/>
</dbReference>
<dbReference type="CDD" id="cd01359">
    <property type="entry name" value="Argininosuccinate_lyase"/>
    <property type="match status" value="1"/>
</dbReference>
<dbReference type="FunFam" id="1.10.275.10:FF:000002">
    <property type="entry name" value="Argininosuccinate lyase"/>
    <property type="match status" value="1"/>
</dbReference>
<dbReference type="FunFam" id="1.10.40.30:FF:000001">
    <property type="entry name" value="Argininosuccinate lyase"/>
    <property type="match status" value="1"/>
</dbReference>
<dbReference type="FunFam" id="1.20.200.10:FF:000006">
    <property type="entry name" value="Argininosuccinate lyase"/>
    <property type="match status" value="1"/>
</dbReference>
<dbReference type="Gene3D" id="1.10.40.30">
    <property type="entry name" value="Fumarase/aspartase (C-terminal domain)"/>
    <property type="match status" value="1"/>
</dbReference>
<dbReference type="Gene3D" id="1.20.200.10">
    <property type="entry name" value="Fumarase/aspartase (Central domain)"/>
    <property type="match status" value="1"/>
</dbReference>
<dbReference type="Gene3D" id="1.10.275.10">
    <property type="entry name" value="Fumarase/aspartase (N-terminal domain)"/>
    <property type="match status" value="1"/>
</dbReference>
<dbReference type="HAMAP" id="MF_00006">
    <property type="entry name" value="Arg_succ_lyase"/>
    <property type="match status" value="1"/>
</dbReference>
<dbReference type="InterPro" id="IPR029419">
    <property type="entry name" value="Arg_succ_lyase_C"/>
</dbReference>
<dbReference type="InterPro" id="IPR009049">
    <property type="entry name" value="Argininosuccinate_lyase"/>
</dbReference>
<dbReference type="InterPro" id="IPR024083">
    <property type="entry name" value="Fumarase/histidase_N"/>
</dbReference>
<dbReference type="InterPro" id="IPR020557">
    <property type="entry name" value="Fumarate_lyase_CS"/>
</dbReference>
<dbReference type="InterPro" id="IPR000362">
    <property type="entry name" value="Fumarate_lyase_fam"/>
</dbReference>
<dbReference type="InterPro" id="IPR022761">
    <property type="entry name" value="Fumarate_lyase_N"/>
</dbReference>
<dbReference type="InterPro" id="IPR008948">
    <property type="entry name" value="L-Aspartase-like"/>
</dbReference>
<dbReference type="NCBIfam" id="TIGR00838">
    <property type="entry name" value="argH"/>
    <property type="match status" value="1"/>
</dbReference>
<dbReference type="PANTHER" id="PTHR43814">
    <property type="entry name" value="ARGININOSUCCINATE LYASE"/>
    <property type="match status" value="1"/>
</dbReference>
<dbReference type="PANTHER" id="PTHR43814:SF1">
    <property type="entry name" value="ARGININOSUCCINATE LYASE"/>
    <property type="match status" value="1"/>
</dbReference>
<dbReference type="Pfam" id="PF14698">
    <property type="entry name" value="ASL_C2"/>
    <property type="match status" value="1"/>
</dbReference>
<dbReference type="Pfam" id="PF00206">
    <property type="entry name" value="Lyase_1"/>
    <property type="match status" value="1"/>
</dbReference>
<dbReference type="PRINTS" id="PR00145">
    <property type="entry name" value="ARGSUCLYASE"/>
</dbReference>
<dbReference type="PRINTS" id="PR00149">
    <property type="entry name" value="FUMRATELYASE"/>
</dbReference>
<dbReference type="SUPFAM" id="SSF48557">
    <property type="entry name" value="L-aspartase-like"/>
    <property type="match status" value="1"/>
</dbReference>
<dbReference type="PROSITE" id="PS00163">
    <property type="entry name" value="FUMARATE_LYASES"/>
    <property type="match status" value="1"/>
</dbReference>
<name>ARLY_BACCR</name>
<sequence>MSKLWGGRFTEEAEAWVEEFGASISFDQQLVNQDINGSMAHVTMLAKQGIVTQEEAEKIKIGLQYLLKEAKENKLQFSVEAEDIHLNIEKMLIEQIGEVGGKLHTGRSRNDQVATDMHLYLKEKVEHIIKATKQLQTVLVQQAENNIETIMPGYTHLQRAQPISFAHHILAYFWMLERDVNRYEDSLKRINISPLGAGALAGTTFPIDREYSAELLGFNGIYENSLDAVSDRDFILEFLSNSSMLMMHLSRFCEELILWSSQEFQFIEMSDQYATGSSIMPQKKNPDMAELIRGKTGRVYGNLFSLLTVMKGLPLAYNKDLQEDKEGMFDTVKTVEGCLHIMTGMLETMTVNKEKMGQAVTQDFSNATEIADYLANKGLPFRQAHEIVGKLVLYCTQKGIYLLDVSLETYKEMSSLFEEDLYEVLSPYAAVKRRNSAGGTGFEQIKNALEKAKGLTKEVIKN</sequence>
<keyword id="KW-0028">Amino-acid biosynthesis</keyword>
<keyword id="KW-0055">Arginine biosynthesis</keyword>
<keyword id="KW-0963">Cytoplasm</keyword>
<keyword id="KW-0456">Lyase</keyword>
<keyword id="KW-1185">Reference proteome</keyword>
<reference key="1">
    <citation type="journal article" date="2003" name="Nature">
        <title>Genome sequence of Bacillus cereus and comparative analysis with Bacillus anthracis.</title>
        <authorList>
            <person name="Ivanova N."/>
            <person name="Sorokin A."/>
            <person name="Anderson I."/>
            <person name="Galleron N."/>
            <person name="Candelon B."/>
            <person name="Kapatral V."/>
            <person name="Bhattacharyya A."/>
            <person name="Reznik G."/>
            <person name="Mikhailova N."/>
            <person name="Lapidus A."/>
            <person name="Chu L."/>
            <person name="Mazur M."/>
            <person name="Goltsman E."/>
            <person name="Larsen N."/>
            <person name="D'Souza M."/>
            <person name="Walunas T."/>
            <person name="Grechkin Y."/>
            <person name="Pusch G."/>
            <person name="Haselkorn R."/>
            <person name="Fonstein M."/>
            <person name="Ehrlich S.D."/>
            <person name="Overbeek R."/>
            <person name="Kyrpides N.C."/>
        </authorList>
    </citation>
    <scope>NUCLEOTIDE SEQUENCE [LARGE SCALE GENOMIC DNA]</scope>
    <source>
        <strain>ATCC 14579 / DSM 31 / CCUG 7414 / JCM 2152 / NBRC 15305 / NCIMB 9373 / NCTC 2599 / NRRL B-3711</strain>
    </source>
</reference>
<accession>Q817C7</accession>
<gene>
    <name evidence="1" type="primary">argH</name>
    <name type="ordered locus">BC_4629</name>
</gene>
<organism>
    <name type="scientific">Bacillus cereus (strain ATCC 14579 / DSM 31 / CCUG 7414 / JCM 2152 / NBRC 15305 / NCIMB 9373 / NCTC 2599 / NRRL B-3711)</name>
    <dbReference type="NCBI Taxonomy" id="226900"/>
    <lineage>
        <taxon>Bacteria</taxon>
        <taxon>Bacillati</taxon>
        <taxon>Bacillota</taxon>
        <taxon>Bacilli</taxon>
        <taxon>Bacillales</taxon>
        <taxon>Bacillaceae</taxon>
        <taxon>Bacillus</taxon>
        <taxon>Bacillus cereus group</taxon>
    </lineage>
</organism>
<proteinExistence type="inferred from homology"/>